<sequence>MVRNLTKKSFALSALVAASLMASGVMASDKTEPRNEEYKDKFSKQYNSWHDTAESKEVVDMLEEVPSLVVLWAGYGFAKDYNAPRGHMYAVTDVRNTLRTGAPKAATDGPMPMACWSCKSPDVPRVIEEQGEDGYFTGKWYKGGAEIVNTIGCGDCHEKGKSKLRVSRPFAERAFETLDTPFAKASKKDKQSMVCAQCHVEYYFEKTKDKKGFVKFPWDQGVTVEAMETYYDNLEFKDWTHKVSKTPMLKAQHPGYETWKLGVHGQNNVSCTDCHMPKVKNDKGRKYTDHKVGNPFDRFEETCGTCHEQSKEFMVNLTKERKVKVADLKARAETQLVKAHFEAKAAWDAGATEAEMKPILTDIRHSQWRWDYATASHGVAAHAPDEALRVLGTSVDKAADARIKLAQLLAVKGVKQPIAYPDTSTKAKAQAALGMDMKKMNADKADFKKNTLPKWEAEAKKREATY</sequence>
<feature type="signal peptide" evidence="1">
    <location>
        <begin position="1"/>
        <end position="27"/>
    </location>
</feature>
<feature type="chain" id="PRO_5000278040" description="Cytochrome c-552">
    <location>
        <begin position="28"/>
        <end position="466"/>
    </location>
</feature>
<feature type="binding site" description="axial binding residue" evidence="1">
    <location>
        <position position="87"/>
    </location>
    <ligand>
        <name>heme c</name>
        <dbReference type="ChEBI" id="CHEBI:61717"/>
        <label>3</label>
    </ligand>
    <ligandPart>
        <name>Fe</name>
        <dbReference type="ChEBI" id="CHEBI:18248"/>
    </ligandPart>
</feature>
<feature type="binding site" description="covalent" evidence="1">
    <location>
        <position position="115"/>
    </location>
    <ligand>
        <name>heme</name>
        <dbReference type="ChEBI" id="CHEBI:30413"/>
        <label>1</label>
    </ligand>
</feature>
<feature type="binding site" description="covalent" evidence="1">
    <location>
        <position position="118"/>
    </location>
    <ligand>
        <name>heme</name>
        <dbReference type="ChEBI" id="CHEBI:30413"/>
        <label>1</label>
    </ligand>
</feature>
<feature type="binding site" description="axial binding residue" evidence="1">
    <location>
        <position position="119"/>
    </location>
    <ligand>
        <name>heme</name>
        <dbReference type="ChEBI" id="CHEBI:30413"/>
        <label>1</label>
    </ligand>
    <ligandPart>
        <name>Fe</name>
        <dbReference type="ChEBI" id="CHEBI:18248"/>
    </ligandPart>
</feature>
<feature type="binding site" description="covalent" evidence="1">
    <location>
        <position position="153"/>
    </location>
    <ligand>
        <name>heme c</name>
        <dbReference type="ChEBI" id="CHEBI:61717"/>
        <label>2</label>
    </ligand>
</feature>
<feature type="binding site" description="covalent" evidence="1">
    <location>
        <position position="156"/>
    </location>
    <ligand>
        <name>heme c</name>
        <dbReference type="ChEBI" id="CHEBI:61717"/>
        <label>2</label>
    </ligand>
</feature>
<feature type="binding site" description="axial binding residue" evidence="1">
    <location>
        <position position="157"/>
    </location>
    <ligand>
        <name>heme c</name>
        <dbReference type="ChEBI" id="CHEBI:61717"/>
        <label>2</label>
    </ligand>
    <ligandPart>
        <name>Fe</name>
        <dbReference type="ChEBI" id="CHEBI:18248"/>
    </ligandPart>
</feature>
<feature type="binding site" description="covalent" evidence="1">
    <location>
        <position position="195"/>
    </location>
    <ligand>
        <name>heme c</name>
        <dbReference type="ChEBI" id="CHEBI:61717"/>
        <label>3</label>
    </ligand>
</feature>
<feature type="binding site" description="covalent" evidence="1">
    <location>
        <position position="198"/>
    </location>
    <ligand>
        <name>heme c</name>
        <dbReference type="ChEBI" id="CHEBI:61717"/>
        <label>3</label>
    </ligand>
</feature>
<feature type="binding site" description="axial binding residue" evidence="1">
    <location>
        <position position="199"/>
    </location>
    <ligand>
        <name>heme c</name>
        <dbReference type="ChEBI" id="CHEBI:61717"/>
        <label>3</label>
    </ligand>
    <ligandPart>
        <name>Fe</name>
        <dbReference type="ChEBI" id="CHEBI:18248"/>
    </ligandPart>
</feature>
<feature type="binding site" evidence="1">
    <location>
        <position position="201"/>
    </location>
    <ligand>
        <name>Ca(2+)</name>
        <dbReference type="ChEBI" id="CHEBI:29108"/>
    </ligand>
</feature>
<feature type="binding site" evidence="1">
    <location>
        <position position="202"/>
    </location>
    <ligand>
        <name>Ca(2+)</name>
        <dbReference type="ChEBI" id="CHEBI:29108"/>
    </ligand>
</feature>
<feature type="binding site" evidence="1">
    <location>
        <position position="202"/>
    </location>
    <ligand>
        <name>substrate</name>
    </ligand>
</feature>
<feature type="binding site" evidence="1">
    <location>
        <position position="250"/>
    </location>
    <ligand>
        <name>Ca(2+)</name>
        <dbReference type="ChEBI" id="CHEBI:29108"/>
    </ligand>
</feature>
<feature type="binding site" evidence="1">
    <location>
        <position position="252"/>
    </location>
    <ligand>
        <name>Ca(2+)</name>
        <dbReference type="ChEBI" id="CHEBI:29108"/>
    </ligand>
</feature>
<feature type="binding site" evidence="1">
    <location>
        <position position="253"/>
    </location>
    <ligand>
        <name>substrate</name>
    </ligand>
</feature>
<feature type="binding site" description="axial binding residue" evidence="1">
    <location>
        <position position="264"/>
    </location>
    <ligand>
        <name>heme c</name>
        <dbReference type="ChEBI" id="CHEBI:61717"/>
        <label>5</label>
    </ligand>
    <ligandPart>
        <name>Fe</name>
        <dbReference type="ChEBI" id="CHEBI:18248"/>
    </ligandPart>
</feature>
<feature type="binding site" description="covalent" evidence="1">
    <location>
        <position position="271"/>
    </location>
    <ligand>
        <name>heme c</name>
        <dbReference type="ChEBI" id="CHEBI:61717"/>
        <label>4</label>
    </ligand>
</feature>
<feature type="binding site" description="covalent" evidence="1">
    <location>
        <position position="274"/>
    </location>
    <ligand>
        <name>heme c</name>
        <dbReference type="ChEBI" id="CHEBI:61717"/>
        <label>4</label>
    </ligand>
</feature>
<feature type="binding site" description="axial binding residue" evidence="1">
    <location>
        <position position="275"/>
    </location>
    <ligand>
        <name>heme c</name>
        <dbReference type="ChEBI" id="CHEBI:61717"/>
        <label>4</label>
    </ligand>
    <ligandPart>
        <name>Fe</name>
        <dbReference type="ChEBI" id="CHEBI:18248"/>
    </ligandPart>
</feature>
<feature type="binding site" description="axial binding residue" evidence="1">
    <location>
        <position position="290"/>
    </location>
    <ligand>
        <name>heme c</name>
        <dbReference type="ChEBI" id="CHEBI:61717"/>
        <label>2</label>
    </ligand>
    <ligandPart>
        <name>Fe</name>
        <dbReference type="ChEBI" id="CHEBI:18248"/>
    </ligandPart>
</feature>
<feature type="binding site" description="covalent" evidence="1">
    <location>
        <position position="303"/>
    </location>
    <ligand>
        <name>heme c</name>
        <dbReference type="ChEBI" id="CHEBI:61717"/>
        <label>5</label>
    </ligand>
</feature>
<feature type="binding site" description="covalent" evidence="1">
    <location>
        <position position="306"/>
    </location>
    <ligand>
        <name>heme c</name>
        <dbReference type="ChEBI" id="CHEBI:61717"/>
        <label>5</label>
    </ligand>
</feature>
<feature type="binding site" description="axial binding residue" evidence="1">
    <location>
        <position position="307"/>
    </location>
    <ligand>
        <name>heme c</name>
        <dbReference type="ChEBI" id="CHEBI:61717"/>
        <label>5</label>
    </ligand>
    <ligandPart>
        <name>Fe</name>
        <dbReference type="ChEBI" id="CHEBI:18248"/>
    </ligandPart>
</feature>
<feature type="binding site" description="axial binding residue" evidence="1">
    <location>
        <position position="382"/>
    </location>
    <ligand>
        <name>heme c</name>
        <dbReference type="ChEBI" id="CHEBI:61717"/>
        <label>4</label>
    </ligand>
    <ligandPart>
        <name>Fe</name>
        <dbReference type="ChEBI" id="CHEBI:18248"/>
    </ligandPart>
</feature>
<dbReference type="EC" id="1.7.2.2" evidence="1"/>
<dbReference type="EMBL" id="CP000821">
    <property type="protein sequence ID" value="ABV35542.1"/>
    <property type="molecule type" value="Genomic_DNA"/>
</dbReference>
<dbReference type="RefSeq" id="WP_012141278.1">
    <property type="nucleotide sequence ID" value="NC_009831.1"/>
</dbReference>
<dbReference type="SMR" id="A8FRR9"/>
<dbReference type="STRING" id="425104.Ssed_0931"/>
<dbReference type="KEGG" id="sse:Ssed_0931"/>
<dbReference type="eggNOG" id="COG3303">
    <property type="taxonomic scope" value="Bacteria"/>
</dbReference>
<dbReference type="HOGENOM" id="CLU_035040_1_0_6"/>
<dbReference type="OrthoDB" id="9780421at2"/>
<dbReference type="UniPathway" id="UPA00653"/>
<dbReference type="Proteomes" id="UP000002015">
    <property type="component" value="Chromosome"/>
</dbReference>
<dbReference type="GO" id="GO:0030288">
    <property type="term" value="C:outer membrane-bounded periplasmic space"/>
    <property type="evidence" value="ECO:0007669"/>
    <property type="project" value="TreeGrafter"/>
</dbReference>
<dbReference type="GO" id="GO:0005509">
    <property type="term" value="F:calcium ion binding"/>
    <property type="evidence" value="ECO:0007669"/>
    <property type="project" value="UniProtKB-UniRule"/>
</dbReference>
<dbReference type="GO" id="GO:0020037">
    <property type="term" value="F:heme binding"/>
    <property type="evidence" value="ECO:0007669"/>
    <property type="project" value="InterPro"/>
</dbReference>
<dbReference type="GO" id="GO:0005506">
    <property type="term" value="F:iron ion binding"/>
    <property type="evidence" value="ECO:0007669"/>
    <property type="project" value="UniProtKB-UniRule"/>
</dbReference>
<dbReference type="GO" id="GO:0042279">
    <property type="term" value="F:nitrite reductase (cytochrome, ammonia-forming) activity"/>
    <property type="evidence" value="ECO:0007669"/>
    <property type="project" value="UniProtKB-UniRule"/>
</dbReference>
<dbReference type="GO" id="GO:0019645">
    <property type="term" value="P:anaerobic electron transport chain"/>
    <property type="evidence" value="ECO:0007669"/>
    <property type="project" value="TreeGrafter"/>
</dbReference>
<dbReference type="GO" id="GO:0042128">
    <property type="term" value="P:nitrate assimilation"/>
    <property type="evidence" value="ECO:0007669"/>
    <property type="project" value="UniProtKB-UniRule"/>
</dbReference>
<dbReference type="CDD" id="cd00548">
    <property type="entry name" value="NrfA-like"/>
    <property type="match status" value="1"/>
</dbReference>
<dbReference type="FunFam" id="1.10.1130.10:FF:000002">
    <property type="entry name" value="Cytochrome c-552"/>
    <property type="match status" value="1"/>
</dbReference>
<dbReference type="FunFam" id="1.20.140.10:FF:000014">
    <property type="entry name" value="Cytochrome c-552"/>
    <property type="match status" value="1"/>
</dbReference>
<dbReference type="Gene3D" id="1.20.140.10">
    <property type="entry name" value="Butyryl-CoA Dehydrogenase, subunit A, domain 3"/>
    <property type="match status" value="1"/>
</dbReference>
<dbReference type="Gene3D" id="1.10.1130.10">
    <property type="entry name" value="Flavocytochrome C3, Chain A"/>
    <property type="match status" value="1"/>
</dbReference>
<dbReference type="HAMAP" id="MF_01182">
    <property type="entry name" value="Cytochrom_C552"/>
    <property type="match status" value="1"/>
</dbReference>
<dbReference type="InterPro" id="IPR003321">
    <property type="entry name" value="Cyt_c552"/>
</dbReference>
<dbReference type="InterPro" id="IPR017570">
    <property type="entry name" value="Cyt_c_NO2Rdtase_formate-dep"/>
</dbReference>
<dbReference type="InterPro" id="IPR036280">
    <property type="entry name" value="Multihaem_cyt_sf"/>
</dbReference>
<dbReference type="NCBIfam" id="TIGR03152">
    <property type="entry name" value="cyto_c552_HCOOH"/>
    <property type="match status" value="1"/>
</dbReference>
<dbReference type="NCBIfam" id="NF008339">
    <property type="entry name" value="PRK11125.1"/>
    <property type="match status" value="1"/>
</dbReference>
<dbReference type="PANTHER" id="PTHR30633:SF0">
    <property type="entry name" value="CYTOCHROME C-552"/>
    <property type="match status" value="1"/>
</dbReference>
<dbReference type="PANTHER" id="PTHR30633">
    <property type="entry name" value="CYTOCHROME C-552 RESPIRATORY NITRITE REDUCTASE"/>
    <property type="match status" value="1"/>
</dbReference>
<dbReference type="Pfam" id="PF02335">
    <property type="entry name" value="Cytochrom_C552"/>
    <property type="match status" value="1"/>
</dbReference>
<dbReference type="PIRSF" id="PIRSF000243">
    <property type="entry name" value="Cyt_c552"/>
    <property type="match status" value="1"/>
</dbReference>
<dbReference type="SUPFAM" id="SSF48695">
    <property type="entry name" value="Multiheme cytochromes"/>
    <property type="match status" value="1"/>
</dbReference>
<dbReference type="PROSITE" id="PS51008">
    <property type="entry name" value="MULTIHEME_CYTC"/>
    <property type="match status" value="1"/>
</dbReference>
<organism>
    <name type="scientific">Shewanella sediminis (strain HAW-EB3)</name>
    <dbReference type="NCBI Taxonomy" id="425104"/>
    <lineage>
        <taxon>Bacteria</taxon>
        <taxon>Pseudomonadati</taxon>
        <taxon>Pseudomonadota</taxon>
        <taxon>Gammaproteobacteria</taxon>
        <taxon>Alteromonadales</taxon>
        <taxon>Shewanellaceae</taxon>
        <taxon>Shewanella</taxon>
    </lineage>
</organism>
<name>NRFA_SHESH</name>
<accession>A8FRR9</accession>
<protein>
    <recommendedName>
        <fullName evidence="1">Cytochrome c-552</fullName>
        <ecNumber evidence="1">1.7.2.2</ecNumber>
    </recommendedName>
    <alternativeName>
        <fullName evidence="1">Ammonia-forming cytochrome c nitrite reductase</fullName>
        <shortName evidence="1">Cytochrome c nitrite reductase</shortName>
    </alternativeName>
</protein>
<evidence type="ECO:0000255" key="1">
    <source>
        <dbReference type="HAMAP-Rule" id="MF_01182"/>
    </source>
</evidence>
<keyword id="KW-0106">Calcium</keyword>
<keyword id="KW-0249">Electron transport</keyword>
<keyword id="KW-0349">Heme</keyword>
<keyword id="KW-0408">Iron</keyword>
<keyword id="KW-0479">Metal-binding</keyword>
<keyword id="KW-0560">Oxidoreductase</keyword>
<keyword id="KW-0574">Periplasm</keyword>
<keyword id="KW-1185">Reference proteome</keyword>
<keyword id="KW-0732">Signal</keyword>
<keyword id="KW-0813">Transport</keyword>
<gene>
    <name evidence="1" type="primary">nrfA</name>
    <name type="ordered locus">Ssed_0931</name>
</gene>
<proteinExistence type="inferred from homology"/>
<reference key="1">
    <citation type="submission" date="2007-08" db="EMBL/GenBank/DDBJ databases">
        <title>Complete sequence of Shewanella sediminis HAW-EB3.</title>
        <authorList>
            <consortium name="US DOE Joint Genome Institute"/>
            <person name="Copeland A."/>
            <person name="Lucas S."/>
            <person name="Lapidus A."/>
            <person name="Barry K."/>
            <person name="Glavina del Rio T."/>
            <person name="Dalin E."/>
            <person name="Tice H."/>
            <person name="Pitluck S."/>
            <person name="Chertkov O."/>
            <person name="Brettin T."/>
            <person name="Bruce D."/>
            <person name="Detter J.C."/>
            <person name="Han C."/>
            <person name="Schmutz J."/>
            <person name="Larimer F."/>
            <person name="Land M."/>
            <person name="Hauser L."/>
            <person name="Kyrpides N."/>
            <person name="Kim E."/>
            <person name="Zhao J.-S."/>
            <person name="Richardson P."/>
        </authorList>
    </citation>
    <scope>NUCLEOTIDE SEQUENCE [LARGE SCALE GENOMIC DNA]</scope>
    <source>
        <strain>HAW-EB3</strain>
    </source>
</reference>
<comment type="function">
    <text evidence="1">Catalyzes the reduction of nitrite to ammonia, consuming six electrons in the process.</text>
</comment>
<comment type="catalytic activity">
    <reaction evidence="1">
        <text>6 Fe(III)-[cytochrome c] + NH4(+) + 2 H2O = 6 Fe(II)-[cytochrome c] + nitrite + 8 H(+)</text>
        <dbReference type="Rhea" id="RHEA:13089"/>
        <dbReference type="Rhea" id="RHEA-COMP:10350"/>
        <dbReference type="Rhea" id="RHEA-COMP:14399"/>
        <dbReference type="ChEBI" id="CHEBI:15377"/>
        <dbReference type="ChEBI" id="CHEBI:15378"/>
        <dbReference type="ChEBI" id="CHEBI:16301"/>
        <dbReference type="ChEBI" id="CHEBI:28938"/>
        <dbReference type="ChEBI" id="CHEBI:29033"/>
        <dbReference type="ChEBI" id="CHEBI:29034"/>
        <dbReference type="EC" id="1.7.2.2"/>
    </reaction>
</comment>
<comment type="cofactor">
    <cofactor evidence="1">
        <name>Ca(2+)</name>
        <dbReference type="ChEBI" id="CHEBI:29108"/>
    </cofactor>
    <text evidence="1">Binds 1 Ca(2+) ion per monomer.</text>
</comment>
<comment type="cofactor">
    <cofactor evidence="1">
        <name>heme c</name>
        <dbReference type="ChEBI" id="CHEBI:61717"/>
    </cofactor>
    <text evidence="1">Binds 5 heme c groups covalently per monomer.</text>
</comment>
<comment type="pathway">
    <text evidence="1">Nitrogen metabolism; nitrate reduction (assimilation).</text>
</comment>
<comment type="subcellular location">
    <subcellularLocation>
        <location evidence="1">Periplasm</location>
    </subcellularLocation>
</comment>
<comment type="similarity">
    <text evidence="1">Belongs to the cytochrome c-552 family.</text>
</comment>